<reference key="1">
    <citation type="journal article" date="1995" name="Virology">
        <title>The DNA sequence of human herpesvirus-6: structure, coding content, and genome evolution.</title>
        <authorList>
            <person name="Gompels U.A."/>
            <person name="Nicholas J."/>
            <person name="Lawrence G.L."/>
            <person name="Jones M."/>
            <person name="Thomson B.J."/>
            <person name="Martin M.E.D."/>
            <person name="Efstathiou S."/>
            <person name="Craxton M.A."/>
            <person name="Macaulay H.A."/>
        </authorList>
    </citation>
    <scope>NUCLEOTIDE SEQUENCE [LARGE SCALE GENOMIC DNA]</scope>
</reference>
<keyword id="KW-1185">Reference proteome</keyword>
<dbReference type="EMBL" id="X83413">
    <property type="protein sequence ID" value="CAA58386.1"/>
    <property type="molecule type" value="Genomic_DNA"/>
</dbReference>
<dbReference type="RefSeq" id="NP_042945.1">
    <property type="nucleotide sequence ID" value="NC_001664.2"/>
</dbReference>
<dbReference type="DNASU" id="1487932"/>
<dbReference type="GeneID" id="1487932"/>
<dbReference type="KEGG" id="vg:1487932"/>
<dbReference type="Proteomes" id="UP000009295">
    <property type="component" value="Segment"/>
</dbReference>
<dbReference type="InterPro" id="IPR004290">
    <property type="entry name" value="Herpes_UL79"/>
</dbReference>
<dbReference type="Pfam" id="PF03049">
    <property type="entry name" value="Herpes_UL79"/>
    <property type="match status" value="1"/>
</dbReference>
<comment type="similarity">
    <text evidence="1">Belongs to the herpesviridae UL79 family.</text>
</comment>
<protein>
    <recommendedName>
        <fullName>Protein U52</fullName>
    </recommendedName>
</protein>
<feature type="chain" id="PRO_0000116222" description="Protein U52">
    <location>
        <begin position="1"/>
        <end position="258"/>
    </location>
</feature>
<proteinExistence type="inferred from homology"/>
<evidence type="ECO:0000305" key="1"/>
<gene>
    <name type="primary">U52</name>
    <name type="synonym">XKLF1</name>
</gene>
<accession>P52469</accession>
<name>UL79_HHV6U</name>
<sequence length="258" mass="30030">MTQIGQYIKLNDAVPNLILHITTKLLRNENLTSFKQEELLLIQHVCTSMLSHGIKILLLRESLYNSGIGDIVILNRKISNNYWFRIFSILKQHSDAELLRHMFNESHSAYISKKLHYSGNVSHMINFLFMDEFGVNLKIPEELICEGNIVFSVGAIYNHRLLKICRFFNRFWGDQEREPTVRLICKHLWFAYLIMFGKFEISTLAYSQQRAEHKAGLFSFLQNDFKVFCGMSENPQLLDSSAIFDLTGISAEDLFSYE</sequence>
<organism>
    <name type="scientific">Human herpesvirus 6A (strain Uganda-1102)</name>
    <name type="common">HHV-6 variant A</name>
    <name type="synonym">Human B lymphotropic virus</name>
    <dbReference type="NCBI Taxonomy" id="10370"/>
    <lineage>
        <taxon>Viruses</taxon>
        <taxon>Duplodnaviria</taxon>
        <taxon>Heunggongvirae</taxon>
        <taxon>Peploviricota</taxon>
        <taxon>Herviviricetes</taxon>
        <taxon>Herpesvirales</taxon>
        <taxon>Orthoherpesviridae</taxon>
        <taxon>Betaherpesvirinae</taxon>
        <taxon>Roseolovirus</taxon>
        <taxon>Roseolovirus humanbeta6a</taxon>
        <taxon>Human betaherpesvirus 6A</taxon>
    </lineage>
</organism>
<organismHost>
    <name type="scientific">Homo sapiens</name>
    <name type="common">Human</name>
    <dbReference type="NCBI Taxonomy" id="9606"/>
</organismHost>